<protein>
    <recommendedName>
        <fullName>Uncharacterized protein y4jQ</fullName>
    </recommendedName>
</protein>
<sequence>MSLLMAHRKSKSSQRKLRNRSSSLTPQKRRIRASKGSHDTILSIRNETSSLEALSRTIQWTLARYKYHRYLVSLSPRTPSQLPDYVLAANDSLENAMKWQIASISAVGGKIASHNKNTYTSIDQITDYSASLERANAEIRTCMWSFSSASQALFSLARTKGLDAQRRWMQGSLYVANPSISNIILYSKGIASEGDRHPSDVLEVLNRFIFSKFADEELNLLLYYLTFNPLLNVEVASKLSPLLLYFPVVDQYEFLANLFTSDQSLSKPDVLPFGRDFVEILSSTGDWRASPKAALAERVEPSRFTIPLLNRWCGYLLDSIGILDGVSSAPDREFDIALANEFFHQPQSPRAYLASSIFAMKSAQTLADVKSALYKREIANVHFEKVEQQIAPPDQRFIDYSFAAVAAEVGISESVYENRELFRIACICGISEGRTLDTLILLCEYTNADPFGSSYFPADLFSASVTEDEVARIGHDPRVAIGLSRVAASLGDEGQNLVYIAVEQHLNVRGMSKPSEIVADSAVDVAFLREACTSSSLRQSLEFLSKAEMEDERIQVLFNLAQVDPANEDDYIEEVHTIIGQQTIEELLQRFHVGKVQCDEQALSTWALIELSPKFNRLKDFIDAGLPPVEKDADIQFIAHLTSGKSETFTFKVPNNESLDIARTILAELNSKYALDPRYGVDSYLSLGMRHGAVEAHLQSPLSAENILTAKEPLGYPDDCFWTRYFIDNGFECYGEKIGPVLATFSEKFDNKLEAIKNDLLQVRRPDKPEGLIVADWSEASVLSACARFAEVPDFEAFIAEFTLIFWANVEGNLAAAREFIENVLSNELNELLDELEANVRQATGQQRLAPFSDALMRARQELGNAVNDVSTWHNVARSTDVEPLGLVEIISAAQKIVCRLYPDFEPRVTFSGDTGITVTYSLHILIEVFKALFTNVYAHSEVENPAVDVHMAMTVEDALDVEFVSDCNDMGKAERAALDANEKIRTGEYEKKLPKEGGSGLAKVARSTLRDGKPNTVISVDHSTCKFHVKMAFKIIQI</sequence>
<dbReference type="EMBL" id="U00090">
    <property type="protein sequence ID" value="AAB91729.1"/>
    <property type="molecule type" value="Genomic_DNA"/>
</dbReference>
<dbReference type="PIR" id="T28644">
    <property type="entry name" value="T28644"/>
</dbReference>
<dbReference type="RefSeq" id="NP_443927.1">
    <property type="nucleotide sequence ID" value="NC_000914.2"/>
</dbReference>
<dbReference type="KEGG" id="rhi:NGR_a02980"/>
<dbReference type="PATRIC" id="fig|394.7.peg.313"/>
<dbReference type="eggNOG" id="COG4585">
    <property type="taxonomic scope" value="Bacteria"/>
</dbReference>
<dbReference type="HOGENOM" id="CLU_293704_0_0_5"/>
<dbReference type="OrthoDB" id="7833808at2"/>
<dbReference type="Proteomes" id="UP000001054">
    <property type="component" value="Plasmid pNGR234a"/>
</dbReference>
<feature type="chain" id="PRO_0000200883" description="Uncharacterized protein y4jQ">
    <location>
        <begin position="1"/>
        <end position="1039"/>
    </location>
</feature>
<feature type="region of interest" description="Disordered" evidence="1">
    <location>
        <begin position="1"/>
        <end position="38"/>
    </location>
</feature>
<feature type="compositionally biased region" description="Basic residues" evidence="1">
    <location>
        <begin position="1"/>
        <end position="19"/>
    </location>
</feature>
<geneLocation type="plasmid">
    <name>sym pNGR234a</name>
</geneLocation>
<organism>
    <name type="scientific">Sinorhizobium fredii (strain NBRC 101917 / NGR234)</name>
    <dbReference type="NCBI Taxonomy" id="394"/>
    <lineage>
        <taxon>Bacteria</taxon>
        <taxon>Pseudomonadati</taxon>
        <taxon>Pseudomonadota</taxon>
        <taxon>Alphaproteobacteria</taxon>
        <taxon>Hyphomicrobiales</taxon>
        <taxon>Rhizobiaceae</taxon>
        <taxon>Sinorhizobium/Ensifer group</taxon>
        <taxon>Sinorhizobium</taxon>
    </lineage>
</organism>
<name>Y4JQ_SINFN</name>
<reference key="1">
    <citation type="journal article" date="1997" name="Nature">
        <title>Molecular basis of symbiosis between Rhizobium and legumes.</title>
        <authorList>
            <person name="Freiberg C.A."/>
            <person name="Fellay R."/>
            <person name="Bairoch A."/>
            <person name="Broughton W.J."/>
            <person name="Rosenthal A."/>
            <person name="Perret X."/>
        </authorList>
    </citation>
    <scope>NUCLEOTIDE SEQUENCE [LARGE SCALE GENOMIC DNA]</scope>
    <source>
        <strain>NBRC 101917 / NGR234</strain>
    </source>
</reference>
<reference key="2">
    <citation type="journal article" date="2009" name="Appl. Environ. Microbiol.">
        <title>Rhizobium sp. strain NGR234 possesses a remarkable number of secretion systems.</title>
        <authorList>
            <person name="Schmeisser C."/>
            <person name="Liesegang H."/>
            <person name="Krysciak D."/>
            <person name="Bakkou N."/>
            <person name="Le Quere A."/>
            <person name="Wollherr A."/>
            <person name="Heinemeyer I."/>
            <person name="Morgenstern B."/>
            <person name="Pommerening-Roeser A."/>
            <person name="Flores M."/>
            <person name="Palacios R."/>
            <person name="Brenner S."/>
            <person name="Gottschalk G."/>
            <person name="Schmitz R.A."/>
            <person name="Broughton W.J."/>
            <person name="Perret X."/>
            <person name="Strittmatter A.W."/>
            <person name="Streit W.R."/>
        </authorList>
    </citation>
    <scope>NUCLEOTIDE SEQUENCE [LARGE SCALE GENOMIC DNA]</scope>
    <source>
        <strain>NBRC 101917 / NGR234</strain>
    </source>
</reference>
<keyword id="KW-0614">Plasmid</keyword>
<keyword id="KW-1185">Reference proteome</keyword>
<proteinExistence type="predicted"/>
<evidence type="ECO:0000256" key="1">
    <source>
        <dbReference type="SAM" id="MobiDB-lite"/>
    </source>
</evidence>
<gene>
    <name type="ordered locus">NGR_a02980</name>
    <name type="ORF">y4jQ</name>
</gene>
<accession>P55517</accession>